<protein>
    <recommendedName>
        <fullName>Ferric uptake regulation protein</fullName>
        <shortName>Ferric uptake regulator</shortName>
    </recommendedName>
</protein>
<dbReference type="EMBL" id="L11361">
    <property type="protein sequence ID" value="AAA72351.1"/>
    <property type="molecule type" value="Genomic_DNA"/>
</dbReference>
<dbReference type="RefSeq" id="WP_010359353.1">
    <property type="nucleotide sequence ID" value="NZ_WHPL01000002.1"/>
</dbReference>
<dbReference type="SMR" id="Q51008"/>
<dbReference type="GeneID" id="66754363"/>
<dbReference type="OMA" id="HDHVILT"/>
<dbReference type="GO" id="GO:0005829">
    <property type="term" value="C:cytosol"/>
    <property type="evidence" value="ECO:0007669"/>
    <property type="project" value="TreeGrafter"/>
</dbReference>
<dbReference type="GO" id="GO:0003700">
    <property type="term" value="F:DNA-binding transcription factor activity"/>
    <property type="evidence" value="ECO:0007669"/>
    <property type="project" value="InterPro"/>
</dbReference>
<dbReference type="GO" id="GO:0000976">
    <property type="term" value="F:transcription cis-regulatory region binding"/>
    <property type="evidence" value="ECO:0007669"/>
    <property type="project" value="TreeGrafter"/>
</dbReference>
<dbReference type="GO" id="GO:0008270">
    <property type="term" value="F:zinc ion binding"/>
    <property type="evidence" value="ECO:0007669"/>
    <property type="project" value="TreeGrafter"/>
</dbReference>
<dbReference type="GO" id="GO:0045892">
    <property type="term" value="P:negative regulation of DNA-templated transcription"/>
    <property type="evidence" value="ECO:0007669"/>
    <property type="project" value="TreeGrafter"/>
</dbReference>
<dbReference type="GO" id="GO:1900705">
    <property type="term" value="P:negative regulation of siderophore biosynthetic process"/>
    <property type="evidence" value="ECO:0007669"/>
    <property type="project" value="TreeGrafter"/>
</dbReference>
<dbReference type="CDD" id="cd07153">
    <property type="entry name" value="Fur_like"/>
    <property type="match status" value="1"/>
</dbReference>
<dbReference type="FunFam" id="1.10.10.10:FF:000007">
    <property type="entry name" value="Ferric uptake regulation protein"/>
    <property type="match status" value="1"/>
</dbReference>
<dbReference type="FunFam" id="3.30.1490.190:FF:000001">
    <property type="entry name" value="Ferric uptake regulation protein"/>
    <property type="match status" value="1"/>
</dbReference>
<dbReference type="Gene3D" id="3.30.1490.190">
    <property type="match status" value="1"/>
</dbReference>
<dbReference type="Gene3D" id="1.10.10.10">
    <property type="entry name" value="Winged helix-like DNA-binding domain superfamily/Winged helix DNA-binding domain"/>
    <property type="match status" value="1"/>
</dbReference>
<dbReference type="InterPro" id="IPR002481">
    <property type="entry name" value="FUR"/>
</dbReference>
<dbReference type="InterPro" id="IPR043135">
    <property type="entry name" value="Fur_C"/>
</dbReference>
<dbReference type="InterPro" id="IPR036388">
    <property type="entry name" value="WH-like_DNA-bd_sf"/>
</dbReference>
<dbReference type="InterPro" id="IPR036390">
    <property type="entry name" value="WH_DNA-bd_sf"/>
</dbReference>
<dbReference type="NCBIfam" id="NF006999">
    <property type="entry name" value="PRK09462.1"/>
    <property type="match status" value="1"/>
</dbReference>
<dbReference type="PANTHER" id="PTHR33202:SF2">
    <property type="entry name" value="FERRIC UPTAKE REGULATION PROTEIN"/>
    <property type="match status" value="1"/>
</dbReference>
<dbReference type="PANTHER" id="PTHR33202">
    <property type="entry name" value="ZINC UPTAKE REGULATION PROTEIN"/>
    <property type="match status" value="1"/>
</dbReference>
<dbReference type="Pfam" id="PF01475">
    <property type="entry name" value="FUR"/>
    <property type="match status" value="1"/>
</dbReference>
<dbReference type="SUPFAM" id="SSF46785">
    <property type="entry name" value="Winged helix' DNA-binding domain"/>
    <property type="match status" value="1"/>
</dbReference>
<feature type="chain" id="PRO_0000095563" description="Ferric uptake regulation protein">
    <location>
        <begin position="1"/>
        <end position="144"/>
    </location>
</feature>
<feature type="region of interest" description="DNA-binding" evidence="1">
    <location>
        <begin position="1"/>
        <end position="86"/>
    </location>
</feature>
<feature type="region of interest" description="Dimerization" evidence="1">
    <location>
        <begin position="87"/>
        <end position="144"/>
    </location>
</feature>
<feature type="binding site" evidence="1">
    <location>
        <position position="35"/>
    </location>
    <ligand>
        <name>Zn(2+)</name>
        <dbReference type="ChEBI" id="CHEBI:29105"/>
    </ligand>
</feature>
<feature type="binding site" evidence="1">
    <location>
        <position position="83"/>
    </location>
    <ligand>
        <name>Zn(2+)</name>
        <dbReference type="ChEBI" id="CHEBI:29105"/>
    </ligand>
</feature>
<feature type="binding site" evidence="1">
    <location>
        <position position="89"/>
    </location>
    <ligand>
        <name>Fe cation</name>
        <dbReference type="ChEBI" id="CHEBI:24875"/>
    </ligand>
</feature>
<feature type="binding site" evidence="1">
    <location>
        <position position="91"/>
    </location>
    <ligand>
        <name>Fe cation</name>
        <dbReference type="ChEBI" id="CHEBI:24875"/>
    </ligand>
</feature>
<feature type="binding site" evidence="1">
    <location>
        <position position="92"/>
    </location>
    <ligand>
        <name>Zn(2+)</name>
        <dbReference type="ChEBI" id="CHEBI:29105"/>
    </ligand>
</feature>
<feature type="binding site" evidence="1">
    <location>
        <position position="95"/>
    </location>
    <ligand>
        <name>Zn(2+)</name>
        <dbReference type="ChEBI" id="CHEBI:29105"/>
    </ligand>
</feature>
<feature type="binding site" evidence="1">
    <location>
        <position position="98"/>
    </location>
    <ligand>
        <name>Zn(2+)</name>
        <dbReference type="ChEBI" id="CHEBI:29105"/>
    </ligand>
</feature>
<feature type="binding site" evidence="1">
    <location>
        <position position="103"/>
    </location>
    <ligand>
        <name>Zn(2+)</name>
        <dbReference type="ChEBI" id="CHEBI:29105"/>
    </ligand>
</feature>
<feature type="binding site" evidence="1">
    <location>
        <position position="110"/>
    </location>
    <ligand>
        <name>Fe cation</name>
        <dbReference type="ChEBI" id="CHEBI:24875"/>
    </ligand>
</feature>
<feature type="binding site" evidence="1">
    <location>
        <position position="127"/>
    </location>
    <ligand>
        <name>Fe cation</name>
        <dbReference type="ChEBI" id="CHEBI:24875"/>
    </ligand>
</feature>
<reference key="1">
    <citation type="journal article" date="1993" name="Infect. Immun.">
        <title>Identification and cloning of a fur homolog from Neisseria gonorrhoeae.</title>
        <authorList>
            <person name="Berish S.A."/>
            <person name="Subbarao S."/>
            <person name="Chen C.Y."/>
            <person name="Trees D.L."/>
            <person name="Morse S.A."/>
        </authorList>
    </citation>
    <scope>NUCLEOTIDE SEQUENCE [GENOMIC DNA]</scope>
    <source>
        <strain>ATCC 33084 / F62 / M-1914</strain>
    </source>
</reference>
<sequence length="144" mass="16411">MEKFSNIAQLKDSGLKVTGPRLKILDLFEKHAEEHLSAEDVYRILLEEGVEIGVATIYRVLTQFEQAGILQRHHFETGKAVYELDKGDHHDHIVCVKCGEVTEFHNPEIEALQDKIAEENGYRIVDHALYMYGVCSDCQAKGKR</sequence>
<evidence type="ECO:0000250" key="1"/>
<evidence type="ECO:0000305" key="2"/>
<accession>Q51008</accession>
<keyword id="KW-0963">Cytoplasm</keyword>
<keyword id="KW-0238">DNA-binding</keyword>
<keyword id="KW-0408">Iron</keyword>
<keyword id="KW-0479">Metal-binding</keyword>
<keyword id="KW-0678">Repressor</keyword>
<keyword id="KW-0804">Transcription</keyword>
<keyword id="KW-0805">Transcription regulation</keyword>
<keyword id="KW-0862">Zinc</keyword>
<organism>
    <name type="scientific">Neisseria gonorrhoeae</name>
    <dbReference type="NCBI Taxonomy" id="485"/>
    <lineage>
        <taxon>Bacteria</taxon>
        <taxon>Pseudomonadati</taxon>
        <taxon>Pseudomonadota</taxon>
        <taxon>Betaproteobacteria</taxon>
        <taxon>Neisseriales</taxon>
        <taxon>Neisseriaceae</taxon>
        <taxon>Neisseria</taxon>
    </lineage>
</organism>
<proteinExistence type="inferred from homology"/>
<name>FUR_NEIGO</name>
<gene>
    <name type="primary">fur</name>
</gene>
<comment type="function">
    <text>Acts as a global negative controlling element, employing Fe(2+) as a cofactor to bind the operator of the repressed genes. Regulates the expression of the fbp protein.</text>
</comment>
<comment type="subunit">
    <text evidence="1">Homodimer.</text>
</comment>
<comment type="subcellular location">
    <subcellularLocation>
        <location evidence="1">Cytoplasm</location>
    </subcellularLocation>
</comment>
<comment type="similarity">
    <text evidence="2">Belongs to the Fur family.</text>
</comment>